<feature type="chain" id="PRO_1000124350" description="GTPase Der">
    <location>
        <begin position="1"/>
        <end position="439"/>
    </location>
</feature>
<feature type="domain" description="EngA-type G 1">
    <location>
        <begin position="4"/>
        <end position="168"/>
    </location>
</feature>
<feature type="domain" description="EngA-type G 2">
    <location>
        <begin position="177"/>
        <end position="352"/>
    </location>
</feature>
<feature type="domain" description="KH-like" evidence="1">
    <location>
        <begin position="353"/>
        <end position="437"/>
    </location>
</feature>
<feature type="binding site" evidence="1">
    <location>
        <begin position="10"/>
        <end position="17"/>
    </location>
    <ligand>
        <name>GTP</name>
        <dbReference type="ChEBI" id="CHEBI:37565"/>
        <label>1</label>
    </ligand>
</feature>
<feature type="binding site" evidence="1">
    <location>
        <begin position="57"/>
        <end position="61"/>
    </location>
    <ligand>
        <name>GTP</name>
        <dbReference type="ChEBI" id="CHEBI:37565"/>
        <label>1</label>
    </ligand>
</feature>
<feature type="binding site" evidence="1">
    <location>
        <begin position="120"/>
        <end position="123"/>
    </location>
    <ligand>
        <name>GTP</name>
        <dbReference type="ChEBI" id="CHEBI:37565"/>
        <label>1</label>
    </ligand>
</feature>
<feature type="binding site" evidence="1">
    <location>
        <begin position="183"/>
        <end position="190"/>
    </location>
    <ligand>
        <name>GTP</name>
        <dbReference type="ChEBI" id="CHEBI:37565"/>
        <label>2</label>
    </ligand>
</feature>
<feature type="binding site" evidence="1">
    <location>
        <begin position="230"/>
        <end position="234"/>
    </location>
    <ligand>
        <name>GTP</name>
        <dbReference type="ChEBI" id="CHEBI:37565"/>
        <label>2</label>
    </ligand>
</feature>
<feature type="binding site" evidence="1">
    <location>
        <begin position="295"/>
        <end position="298"/>
    </location>
    <ligand>
        <name>GTP</name>
        <dbReference type="ChEBI" id="CHEBI:37565"/>
        <label>2</label>
    </ligand>
</feature>
<reference key="1">
    <citation type="submission" date="2008-10" db="EMBL/GenBank/DDBJ databases">
        <title>Genome sequence of Clostridium botulinum A2 Kyoto.</title>
        <authorList>
            <person name="Shrivastava S."/>
            <person name="Brinkac L.M."/>
            <person name="Brown J.L."/>
            <person name="Bruce D."/>
            <person name="Detter C.C."/>
            <person name="Johnson E.A."/>
            <person name="Munk C.A."/>
            <person name="Smith L.A."/>
            <person name="Smith T.J."/>
            <person name="Sutton G."/>
            <person name="Brettin T.S."/>
        </authorList>
    </citation>
    <scope>NUCLEOTIDE SEQUENCE [LARGE SCALE GENOMIC DNA]</scope>
    <source>
        <strain>Kyoto / Type A2</strain>
    </source>
</reference>
<gene>
    <name evidence="1" type="primary">der</name>
    <name type="synonym">engA</name>
    <name type="ordered locus">CLM_2824</name>
</gene>
<name>DER_CLOBJ</name>
<accession>C1FSU2</accession>
<organism>
    <name type="scientific">Clostridium botulinum (strain Kyoto / Type A2)</name>
    <dbReference type="NCBI Taxonomy" id="536232"/>
    <lineage>
        <taxon>Bacteria</taxon>
        <taxon>Bacillati</taxon>
        <taxon>Bacillota</taxon>
        <taxon>Clostridia</taxon>
        <taxon>Eubacteriales</taxon>
        <taxon>Clostridiaceae</taxon>
        <taxon>Clostridium</taxon>
    </lineage>
</organism>
<comment type="function">
    <text evidence="1">GTPase that plays an essential role in the late steps of ribosome biogenesis.</text>
</comment>
<comment type="subunit">
    <text evidence="1">Associates with the 50S ribosomal subunit.</text>
</comment>
<comment type="similarity">
    <text evidence="1">Belongs to the TRAFAC class TrmE-Era-EngA-EngB-Septin-like GTPase superfamily. EngA (Der) GTPase family.</text>
</comment>
<protein>
    <recommendedName>
        <fullName evidence="1">GTPase Der</fullName>
    </recommendedName>
    <alternativeName>
        <fullName evidence="1">GTP-binding protein EngA</fullName>
    </alternativeName>
</protein>
<dbReference type="EMBL" id="CP001581">
    <property type="protein sequence ID" value="ACO84281.1"/>
    <property type="molecule type" value="Genomic_DNA"/>
</dbReference>
<dbReference type="RefSeq" id="WP_004440576.1">
    <property type="nucleotide sequence ID" value="NC_012563.1"/>
</dbReference>
<dbReference type="SMR" id="C1FSU2"/>
<dbReference type="KEGG" id="cby:CLM_2824"/>
<dbReference type="eggNOG" id="COG1160">
    <property type="taxonomic scope" value="Bacteria"/>
</dbReference>
<dbReference type="HOGENOM" id="CLU_016077_6_2_9"/>
<dbReference type="Proteomes" id="UP000001374">
    <property type="component" value="Chromosome"/>
</dbReference>
<dbReference type="GO" id="GO:0016887">
    <property type="term" value="F:ATP hydrolysis activity"/>
    <property type="evidence" value="ECO:0007669"/>
    <property type="project" value="InterPro"/>
</dbReference>
<dbReference type="GO" id="GO:0005525">
    <property type="term" value="F:GTP binding"/>
    <property type="evidence" value="ECO:0007669"/>
    <property type="project" value="UniProtKB-UniRule"/>
</dbReference>
<dbReference type="GO" id="GO:0043022">
    <property type="term" value="F:ribosome binding"/>
    <property type="evidence" value="ECO:0007669"/>
    <property type="project" value="TreeGrafter"/>
</dbReference>
<dbReference type="GO" id="GO:0042254">
    <property type="term" value="P:ribosome biogenesis"/>
    <property type="evidence" value="ECO:0007669"/>
    <property type="project" value="UniProtKB-KW"/>
</dbReference>
<dbReference type="CDD" id="cd01894">
    <property type="entry name" value="EngA1"/>
    <property type="match status" value="1"/>
</dbReference>
<dbReference type="CDD" id="cd01895">
    <property type="entry name" value="EngA2"/>
    <property type="match status" value="1"/>
</dbReference>
<dbReference type="FunFam" id="3.30.300.20:FF:000004">
    <property type="entry name" value="GTPase Der"/>
    <property type="match status" value="1"/>
</dbReference>
<dbReference type="FunFam" id="3.40.50.300:FF:000040">
    <property type="entry name" value="GTPase Der"/>
    <property type="match status" value="1"/>
</dbReference>
<dbReference type="FunFam" id="3.40.50.300:FF:000057">
    <property type="entry name" value="GTPase Der"/>
    <property type="match status" value="1"/>
</dbReference>
<dbReference type="Gene3D" id="3.30.300.20">
    <property type="match status" value="1"/>
</dbReference>
<dbReference type="Gene3D" id="3.40.50.300">
    <property type="entry name" value="P-loop containing nucleotide triphosphate hydrolases"/>
    <property type="match status" value="2"/>
</dbReference>
<dbReference type="HAMAP" id="MF_00195">
    <property type="entry name" value="GTPase_Der"/>
    <property type="match status" value="1"/>
</dbReference>
<dbReference type="InterPro" id="IPR003593">
    <property type="entry name" value="AAA+_ATPase"/>
</dbReference>
<dbReference type="InterPro" id="IPR031166">
    <property type="entry name" value="G_ENGA"/>
</dbReference>
<dbReference type="InterPro" id="IPR006073">
    <property type="entry name" value="GTP-bd"/>
</dbReference>
<dbReference type="InterPro" id="IPR016484">
    <property type="entry name" value="GTPase_Der"/>
</dbReference>
<dbReference type="InterPro" id="IPR032859">
    <property type="entry name" value="KH_dom-like"/>
</dbReference>
<dbReference type="InterPro" id="IPR015946">
    <property type="entry name" value="KH_dom-like_a/b"/>
</dbReference>
<dbReference type="InterPro" id="IPR027417">
    <property type="entry name" value="P-loop_NTPase"/>
</dbReference>
<dbReference type="InterPro" id="IPR005225">
    <property type="entry name" value="Small_GTP-bd"/>
</dbReference>
<dbReference type="NCBIfam" id="TIGR03594">
    <property type="entry name" value="GTPase_EngA"/>
    <property type="match status" value="1"/>
</dbReference>
<dbReference type="NCBIfam" id="TIGR00231">
    <property type="entry name" value="small_GTP"/>
    <property type="match status" value="2"/>
</dbReference>
<dbReference type="PANTHER" id="PTHR43834">
    <property type="entry name" value="GTPASE DER"/>
    <property type="match status" value="1"/>
</dbReference>
<dbReference type="PANTHER" id="PTHR43834:SF6">
    <property type="entry name" value="GTPASE DER"/>
    <property type="match status" value="1"/>
</dbReference>
<dbReference type="Pfam" id="PF14714">
    <property type="entry name" value="KH_dom-like"/>
    <property type="match status" value="1"/>
</dbReference>
<dbReference type="Pfam" id="PF01926">
    <property type="entry name" value="MMR_HSR1"/>
    <property type="match status" value="2"/>
</dbReference>
<dbReference type="PIRSF" id="PIRSF006485">
    <property type="entry name" value="GTP-binding_EngA"/>
    <property type="match status" value="1"/>
</dbReference>
<dbReference type="PRINTS" id="PR00326">
    <property type="entry name" value="GTP1OBG"/>
</dbReference>
<dbReference type="SMART" id="SM00382">
    <property type="entry name" value="AAA"/>
    <property type="match status" value="2"/>
</dbReference>
<dbReference type="SUPFAM" id="SSF52540">
    <property type="entry name" value="P-loop containing nucleoside triphosphate hydrolases"/>
    <property type="match status" value="2"/>
</dbReference>
<dbReference type="PROSITE" id="PS51712">
    <property type="entry name" value="G_ENGA"/>
    <property type="match status" value="2"/>
</dbReference>
<sequence>MGKPIVAIVGRPNVGKSTLFNKLAGKRIAIVQDTPGVTRDRIYAEAEWLNYKFTMIDTGGIEPKSEDIIVSQMRRQAQIAIEMANVIIFLVDGKEGLAPADEEVAQMLRKSKKPVVLVVNKIDKLKDENNAYEFYNLGIGDPVTISSSQALGLGDMLDRVVEYFKDDESDGEDDERINIAFIGKPNVGKSSLINKLLGEERLIVSDIPGTTRDSIDSYVDTEFGEFTLIDTAGLRRKSKVKEEIERYSVIRTYASIERADVCILMIDATEGISEQDQKIIGYAHDINKAILVIVNKWDLVEKDDKTMDKFKKELKVNLSFMPYAKYLFISAKTGQRVVKVLQTAKECYDNYTKRVKTGVLNDVISQAIMMKEPPIVGTKRLKIYYVTQIGTKPPTFIFFVNDPACIHFSYQRYLENQLRENFDFQGTGIKLEFRERKEK</sequence>
<proteinExistence type="inferred from homology"/>
<evidence type="ECO:0000255" key="1">
    <source>
        <dbReference type="HAMAP-Rule" id="MF_00195"/>
    </source>
</evidence>
<keyword id="KW-0342">GTP-binding</keyword>
<keyword id="KW-0547">Nucleotide-binding</keyword>
<keyword id="KW-0677">Repeat</keyword>
<keyword id="KW-0690">Ribosome biogenesis</keyword>